<reference key="1">
    <citation type="submission" date="2006-08" db="EMBL/GenBank/DDBJ databases">
        <title>Complete sequence of Alkalilimnicola ehrilichei MLHE-1.</title>
        <authorList>
            <person name="Copeland A."/>
            <person name="Lucas S."/>
            <person name="Lapidus A."/>
            <person name="Barry K."/>
            <person name="Detter J.C."/>
            <person name="Glavina del Rio T."/>
            <person name="Hammon N."/>
            <person name="Israni S."/>
            <person name="Dalin E."/>
            <person name="Tice H."/>
            <person name="Pitluck S."/>
            <person name="Sims D."/>
            <person name="Brettin T."/>
            <person name="Bruce D."/>
            <person name="Han C."/>
            <person name="Tapia R."/>
            <person name="Gilna P."/>
            <person name="Schmutz J."/>
            <person name="Larimer F."/>
            <person name="Land M."/>
            <person name="Hauser L."/>
            <person name="Kyrpides N."/>
            <person name="Mikhailova N."/>
            <person name="Oremland R.S."/>
            <person name="Hoeft S.E."/>
            <person name="Switzer-Blum J."/>
            <person name="Kulp T."/>
            <person name="King G."/>
            <person name="Tabita R."/>
            <person name="Witte B."/>
            <person name="Santini J.M."/>
            <person name="Basu P."/>
            <person name="Hollibaugh J.T."/>
            <person name="Xie G."/>
            <person name="Stolz J.F."/>
            <person name="Richardson P."/>
        </authorList>
    </citation>
    <scope>NUCLEOTIDE SEQUENCE [LARGE SCALE GENOMIC DNA]</scope>
    <source>
        <strain>ATCC BAA-1101 / DSM 17681 / MLHE-1</strain>
    </source>
</reference>
<protein>
    <recommendedName>
        <fullName evidence="1">Small ribosomal subunit protein uS5</fullName>
    </recommendedName>
    <alternativeName>
        <fullName evidence="2">30S ribosomal protein S5</fullName>
    </alternativeName>
</protein>
<evidence type="ECO:0000255" key="1">
    <source>
        <dbReference type="HAMAP-Rule" id="MF_01307"/>
    </source>
</evidence>
<evidence type="ECO:0000305" key="2"/>
<proteinExistence type="inferred from homology"/>
<sequence>MANTDAQNDGLREKLVAINRVAKVVKGGRQFGFTALAVVGDGDGQVGFGYGKAREVPAAIQKAMEKARANMKRVHLDGGTLQYAVTANHGSSKVYMQPASAGTGIIAGGAMRAVFEVVGVQDVLAKAIGSRNPINVVRATIKGLTDVDSPDAVAARRGKKVEDIVG</sequence>
<comment type="function">
    <text evidence="1">With S4 and S12 plays an important role in translational accuracy.</text>
</comment>
<comment type="function">
    <text evidence="1">Located at the back of the 30S subunit body where it stabilizes the conformation of the head with respect to the body.</text>
</comment>
<comment type="subunit">
    <text evidence="1">Part of the 30S ribosomal subunit. Contacts proteins S4 and S8.</text>
</comment>
<comment type="domain">
    <text>The N-terminal domain interacts with the head of the 30S subunit; the C-terminal domain interacts with the body and contacts protein S4. The interaction surface between S4 and S5 is involved in control of translational fidelity.</text>
</comment>
<comment type="similarity">
    <text evidence="1">Belongs to the universal ribosomal protein uS5 family.</text>
</comment>
<feature type="chain" id="PRO_0000323059" description="Small ribosomal subunit protein uS5">
    <location>
        <begin position="1"/>
        <end position="166"/>
    </location>
</feature>
<feature type="domain" description="S5 DRBM" evidence="1">
    <location>
        <begin position="11"/>
        <end position="74"/>
    </location>
</feature>
<organism>
    <name type="scientific">Alkalilimnicola ehrlichii (strain ATCC BAA-1101 / DSM 17681 / MLHE-1)</name>
    <dbReference type="NCBI Taxonomy" id="187272"/>
    <lineage>
        <taxon>Bacteria</taxon>
        <taxon>Pseudomonadati</taxon>
        <taxon>Pseudomonadota</taxon>
        <taxon>Gammaproteobacteria</taxon>
        <taxon>Chromatiales</taxon>
        <taxon>Ectothiorhodospiraceae</taxon>
        <taxon>Alkalilimnicola</taxon>
    </lineage>
</organism>
<dbReference type="EMBL" id="CP000453">
    <property type="protein sequence ID" value="ABI55829.1"/>
    <property type="molecule type" value="Genomic_DNA"/>
</dbReference>
<dbReference type="RefSeq" id="WP_011628224.1">
    <property type="nucleotide sequence ID" value="NC_008340.1"/>
</dbReference>
<dbReference type="SMR" id="Q0ABF8"/>
<dbReference type="KEGG" id="aeh:Mlg_0475"/>
<dbReference type="eggNOG" id="COG0098">
    <property type="taxonomic scope" value="Bacteria"/>
</dbReference>
<dbReference type="HOGENOM" id="CLU_065898_2_2_6"/>
<dbReference type="OrthoDB" id="9809045at2"/>
<dbReference type="Proteomes" id="UP000001962">
    <property type="component" value="Chromosome"/>
</dbReference>
<dbReference type="GO" id="GO:0015935">
    <property type="term" value="C:small ribosomal subunit"/>
    <property type="evidence" value="ECO:0007669"/>
    <property type="project" value="InterPro"/>
</dbReference>
<dbReference type="GO" id="GO:0019843">
    <property type="term" value="F:rRNA binding"/>
    <property type="evidence" value="ECO:0007669"/>
    <property type="project" value="UniProtKB-UniRule"/>
</dbReference>
<dbReference type="GO" id="GO:0003735">
    <property type="term" value="F:structural constituent of ribosome"/>
    <property type="evidence" value="ECO:0007669"/>
    <property type="project" value="InterPro"/>
</dbReference>
<dbReference type="GO" id="GO:0006412">
    <property type="term" value="P:translation"/>
    <property type="evidence" value="ECO:0007669"/>
    <property type="project" value="UniProtKB-UniRule"/>
</dbReference>
<dbReference type="FunFam" id="3.30.160.20:FF:000001">
    <property type="entry name" value="30S ribosomal protein S5"/>
    <property type="match status" value="1"/>
</dbReference>
<dbReference type="FunFam" id="3.30.230.10:FF:000002">
    <property type="entry name" value="30S ribosomal protein S5"/>
    <property type="match status" value="1"/>
</dbReference>
<dbReference type="Gene3D" id="3.30.160.20">
    <property type="match status" value="1"/>
</dbReference>
<dbReference type="Gene3D" id="3.30.230.10">
    <property type="match status" value="1"/>
</dbReference>
<dbReference type="HAMAP" id="MF_01307_B">
    <property type="entry name" value="Ribosomal_uS5_B"/>
    <property type="match status" value="1"/>
</dbReference>
<dbReference type="InterPro" id="IPR020568">
    <property type="entry name" value="Ribosomal_Su5_D2-typ_SF"/>
</dbReference>
<dbReference type="InterPro" id="IPR000851">
    <property type="entry name" value="Ribosomal_uS5"/>
</dbReference>
<dbReference type="InterPro" id="IPR005712">
    <property type="entry name" value="Ribosomal_uS5_bac-type"/>
</dbReference>
<dbReference type="InterPro" id="IPR005324">
    <property type="entry name" value="Ribosomal_uS5_C"/>
</dbReference>
<dbReference type="InterPro" id="IPR013810">
    <property type="entry name" value="Ribosomal_uS5_N"/>
</dbReference>
<dbReference type="InterPro" id="IPR018192">
    <property type="entry name" value="Ribosomal_uS5_N_CS"/>
</dbReference>
<dbReference type="InterPro" id="IPR014721">
    <property type="entry name" value="Ribsml_uS5_D2-typ_fold_subgr"/>
</dbReference>
<dbReference type="NCBIfam" id="TIGR01021">
    <property type="entry name" value="rpsE_bact"/>
    <property type="match status" value="1"/>
</dbReference>
<dbReference type="PANTHER" id="PTHR48277">
    <property type="entry name" value="MITOCHONDRIAL RIBOSOMAL PROTEIN S5"/>
    <property type="match status" value="1"/>
</dbReference>
<dbReference type="PANTHER" id="PTHR48277:SF1">
    <property type="entry name" value="MITOCHONDRIAL RIBOSOMAL PROTEIN S5"/>
    <property type="match status" value="1"/>
</dbReference>
<dbReference type="Pfam" id="PF00333">
    <property type="entry name" value="Ribosomal_S5"/>
    <property type="match status" value="1"/>
</dbReference>
<dbReference type="Pfam" id="PF03719">
    <property type="entry name" value="Ribosomal_S5_C"/>
    <property type="match status" value="1"/>
</dbReference>
<dbReference type="SUPFAM" id="SSF54768">
    <property type="entry name" value="dsRNA-binding domain-like"/>
    <property type="match status" value="1"/>
</dbReference>
<dbReference type="SUPFAM" id="SSF54211">
    <property type="entry name" value="Ribosomal protein S5 domain 2-like"/>
    <property type="match status" value="1"/>
</dbReference>
<dbReference type="PROSITE" id="PS00585">
    <property type="entry name" value="RIBOSOMAL_S5"/>
    <property type="match status" value="1"/>
</dbReference>
<dbReference type="PROSITE" id="PS50881">
    <property type="entry name" value="S5_DSRBD"/>
    <property type="match status" value="1"/>
</dbReference>
<gene>
    <name evidence="1" type="primary">rpsE</name>
    <name type="ordered locus">Mlg_0475</name>
</gene>
<accession>Q0ABF8</accession>
<keyword id="KW-1185">Reference proteome</keyword>
<keyword id="KW-0687">Ribonucleoprotein</keyword>
<keyword id="KW-0689">Ribosomal protein</keyword>
<keyword id="KW-0694">RNA-binding</keyword>
<keyword id="KW-0699">rRNA-binding</keyword>
<name>RS5_ALKEH</name>